<sequence>MPLVSMKEMLIDAKENGYAVGQYNINNLEFTQAILEASQEENAPVILGVSEGAARYMSGFYTIVKMVEGLMHDLNITIPVAIHLDHGSSFEKCKEAIDAGFTSVMIDASHSPFEENVATTKKVVEYAHEKGVSVEAELGTVGGQEDDVVADGIIYADPKECQELVEKTGIDALAPALGSVHGPYKGEPKLGFKEMEEIGLSTGLPLVLHGGTGIPTKDIQKAIPFGTAKINVNTENQIASAKAVRDVLNNDKEVYDPRKYLGPAREAIKETVKGKIKEFGTSNRAK</sequence>
<evidence type="ECO:0000250" key="1"/>
<evidence type="ECO:0000305" key="2"/>
<protein>
    <recommendedName>
        <fullName>Fructose-bisphosphate aldolase</fullName>
        <shortName>FBP aldolase</shortName>
        <shortName>FBPA</shortName>
        <ecNumber>4.1.2.13</ecNumber>
    </recommendedName>
    <alternativeName>
        <fullName>Fructose-1,6-bisphosphate aldolase</fullName>
    </alternativeName>
</protein>
<dbReference type="EC" id="4.1.2.13"/>
<dbReference type="EMBL" id="CP000046">
    <property type="protein sequence ID" value="AAW38427.1"/>
    <property type="molecule type" value="Genomic_DNA"/>
</dbReference>
<dbReference type="SMR" id="Q5HE75"/>
<dbReference type="KEGG" id="sac:SACOL2117"/>
<dbReference type="HOGENOM" id="CLU_040088_0_1_9"/>
<dbReference type="BRENDA" id="4.1.2.13">
    <property type="organism ID" value="3352"/>
</dbReference>
<dbReference type="UniPathway" id="UPA00109">
    <property type="reaction ID" value="UER00183"/>
</dbReference>
<dbReference type="Proteomes" id="UP000000530">
    <property type="component" value="Chromosome"/>
</dbReference>
<dbReference type="GO" id="GO:0004332">
    <property type="term" value="F:fructose-bisphosphate aldolase activity"/>
    <property type="evidence" value="ECO:0007669"/>
    <property type="project" value="UniProtKB-EC"/>
</dbReference>
<dbReference type="GO" id="GO:0008270">
    <property type="term" value="F:zinc ion binding"/>
    <property type="evidence" value="ECO:0007669"/>
    <property type="project" value="InterPro"/>
</dbReference>
<dbReference type="GO" id="GO:0030388">
    <property type="term" value="P:fructose 1,6-bisphosphate metabolic process"/>
    <property type="evidence" value="ECO:0007669"/>
    <property type="project" value="InterPro"/>
</dbReference>
<dbReference type="GO" id="GO:0006096">
    <property type="term" value="P:glycolytic process"/>
    <property type="evidence" value="ECO:0007669"/>
    <property type="project" value="UniProtKB-UniPathway"/>
</dbReference>
<dbReference type="CDD" id="cd00947">
    <property type="entry name" value="TBP_aldolase_IIB"/>
    <property type="match status" value="1"/>
</dbReference>
<dbReference type="Gene3D" id="3.20.20.70">
    <property type="entry name" value="Aldolase class I"/>
    <property type="match status" value="1"/>
</dbReference>
<dbReference type="InterPro" id="IPR013785">
    <property type="entry name" value="Aldolase_TIM"/>
</dbReference>
<dbReference type="InterPro" id="IPR050246">
    <property type="entry name" value="Class_II_FBP_aldolase"/>
</dbReference>
<dbReference type="InterPro" id="IPR000771">
    <property type="entry name" value="FBA_II"/>
</dbReference>
<dbReference type="InterPro" id="IPR011289">
    <property type="entry name" value="Fruc_bis_ald_class-2"/>
</dbReference>
<dbReference type="NCBIfam" id="TIGR00167">
    <property type="entry name" value="cbbA"/>
    <property type="match status" value="1"/>
</dbReference>
<dbReference type="NCBIfam" id="TIGR01859">
    <property type="entry name" value="fruc_bis_ald"/>
    <property type="match status" value="1"/>
</dbReference>
<dbReference type="NCBIfam" id="NF006376">
    <property type="entry name" value="PRK08610.1"/>
    <property type="match status" value="1"/>
</dbReference>
<dbReference type="PANTHER" id="PTHR30304">
    <property type="entry name" value="D-TAGATOSE-1,6-BISPHOSPHATE ALDOLASE"/>
    <property type="match status" value="1"/>
</dbReference>
<dbReference type="PANTHER" id="PTHR30304:SF0">
    <property type="entry name" value="D-TAGATOSE-1,6-BISPHOSPHATE ALDOLASE SUBUNIT GATY-RELATED"/>
    <property type="match status" value="1"/>
</dbReference>
<dbReference type="Pfam" id="PF01116">
    <property type="entry name" value="F_bP_aldolase"/>
    <property type="match status" value="1"/>
</dbReference>
<dbReference type="PIRSF" id="PIRSF001359">
    <property type="entry name" value="F_bP_aldolase_II"/>
    <property type="match status" value="1"/>
</dbReference>
<dbReference type="SUPFAM" id="SSF51569">
    <property type="entry name" value="Aldolase"/>
    <property type="match status" value="1"/>
</dbReference>
<dbReference type="PROSITE" id="PS00806">
    <property type="entry name" value="ALDOLASE_CLASS_II_2"/>
    <property type="match status" value="1"/>
</dbReference>
<proteinExistence type="inferred from homology"/>
<gene>
    <name type="primary">fba</name>
    <name type="synonym">fbaA</name>
    <name type="ordered locus">SACOL2117</name>
</gene>
<reference key="1">
    <citation type="journal article" date="2005" name="J. Bacteriol.">
        <title>Insights on evolution of virulence and resistance from the complete genome analysis of an early methicillin-resistant Staphylococcus aureus strain and a biofilm-producing methicillin-resistant Staphylococcus epidermidis strain.</title>
        <authorList>
            <person name="Gill S.R."/>
            <person name="Fouts D.E."/>
            <person name="Archer G.L."/>
            <person name="Mongodin E.F."/>
            <person name="DeBoy R.T."/>
            <person name="Ravel J."/>
            <person name="Paulsen I.T."/>
            <person name="Kolonay J.F."/>
            <person name="Brinkac L.M."/>
            <person name="Beanan M.J."/>
            <person name="Dodson R.J."/>
            <person name="Daugherty S.C."/>
            <person name="Madupu R."/>
            <person name="Angiuoli S.V."/>
            <person name="Durkin A.S."/>
            <person name="Haft D.H."/>
            <person name="Vamathevan J.J."/>
            <person name="Khouri H."/>
            <person name="Utterback T.R."/>
            <person name="Lee C."/>
            <person name="Dimitrov G."/>
            <person name="Jiang L."/>
            <person name="Qin H."/>
            <person name="Weidman J."/>
            <person name="Tran K."/>
            <person name="Kang K.H."/>
            <person name="Hance I.R."/>
            <person name="Nelson K.E."/>
            <person name="Fraser C.M."/>
        </authorList>
    </citation>
    <scope>NUCLEOTIDE SEQUENCE [LARGE SCALE GENOMIC DNA]</scope>
    <source>
        <strain>COL</strain>
    </source>
</reference>
<accession>Q5HE75</accession>
<organism>
    <name type="scientific">Staphylococcus aureus (strain COL)</name>
    <dbReference type="NCBI Taxonomy" id="93062"/>
    <lineage>
        <taxon>Bacteria</taxon>
        <taxon>Bacillati</taxon>
        <taxon>Bacillota</taxon>
        <taxon>Bacilli</taxon>
        <taxon>Bacillales</taxon>
        <taxon>Staphylococcaceae</taxon>
        <taxon>Staphylococcus</taxon>
    </lineage>
</organism>
<comment type="function">
    <text evidence="1">Catalyzes the aldol condensation of dihydroxyacetone phosphate (DHAP or glycerone-phosphate) with glyceraldehyde 3-phosphate (G3P) to form fructose 1,6-bisphosphate (FBP) in gluconeogenesis and the reverse reaction in glycolysis.</text>
</comment>
<comment type="catalytic activity">
    <reaction>
        <text>beta-D-fructose 1,6-bisphosphate = D-glyceraldehyde 3-phosphate + dihydroxyacetone phosphate</text>
        <dbReference type="Rhea" id="RHEA:14729"/>
        <dbReference type="ChEBI" id="CHEBI:32966"/>
        <dbReference type="ChEBI" id="CHEBI:57642"/>
        <dbReference type="ChEBI" id="CHEBI:59776"/>
        <dbReference type="EC" id="4.1.2.13"/>
    </reaction>
</comment>
<comment type="cofactor">
    <cofactor evidence="1">
        <name>Zn(2+)</name>
        <dbReference type="ChEBI" id="CHEBI:29105"/>
    </cofactor>
    <text evidence="1">Binds 2 Zn(2+) ions per subunit. One is catalytic and the other provides a structural contribution.</text>
</comment>
<comment type="pathway">
    <text>Carbohydrate degradation; glycolysis; D-glyceraldehyde 3-phosphate and glycerone phosphate from D-glucose: step 4/4.</text>
</comment>
<comment type="similarity">
    <text evidence="2">Belongs to the class II fructose-bisphosphate aldolase family.</text>
</comment>
<feature type="chain" id="PRO_0000178735" description="Fructose-bisphosphate aldolase">
    <location>
        <begin position="1"/>
        <end position="286"/>
    </location>
</feature>
<feature type="active site" description="Proton donor" evidence="1">
    <location>
        <position position="85"/>
    </location>
</feature>
<feature type="binding site" evidence="1">
    <location>
        <position position="50"/>
    </location>
    <ligand>
        <name>D-glyceraldehyde 3-phosphate</name>
        <dbReference type="ChEBI" id="CHEBI:59776"/>
    </ligand>
</feature>
<feature type="binding site" evidence="1">
    <location>
        <position position="86"/>
    </location>
    <ligand>
        <name>Zn(2+)</name>
        <dbReference type="ChEBI" id="CHEBI:29105"/>
        <label>1</label>
        <note>catalytic</note>
    </ligand>
</feature>
<feature type="binding site" evidence="1">
    <location>
        <position position="107"/>
    </location>
    <ligand>
        <name>Zn(2+)</name>
        <dbReference type="ChEBI" id="CHEBI:29105"/>
        <label>2</label>
    </ligand>
</feature>
<feature type="binding site" evidence="1">
    <location>
        <position position="137"/>
    </location>
    <ligand>
        <name>Zn(2+)</name>
        <dbReference type="ChEBI" id="CHEBI:29105"/>
        <label>2</label>
    </ligand>
</feature>
<feature type="binding site" evidence="1">
    <location>
        <position position="181"/>
    </location>
    <ligand>
        <name>Zn(2+)</name>
        <dbReference type="ChEBI" id="CHEBI:29105"/>
        <label>1</label>
        <note>catalytic</note>
    </ligand>
</feature>
<feature type="binding site" evidence="1">
    <location>
        <position position="182"/>
    </location>
    <ligand>
        <name>dihydroxyacetone phosphate</name>
        <dbReference type="ChEBI" id="CHEBI:57642"/>
    </ligand>
</feature>
<feature type="binding site" evidence="1">
    <location>
        <position position="209"/>
    </location>
    <ligand>
        <name>Zn(2+)</name>
        <dbReference type="ChEBI" id="CHEBI:29105"/>
        <label>1</label>
        <note>catalytic</note>
    </ligand>
</feature>
<feature type="binding site" evidence="1">
    <location>
        <begin position="210"/>
        <end position="212"/>
    </location>
    <ligand>
        <name>dihydroxyacetone phosphate</name>
        <dbReference type="ChEBI" id="CHEBI:57642"/>
    </ligand>
</feature>
<feature type="binding site" evidence="1">
    <location>
        <begin position="231"/>
        <end position="234"/>
    </location>
    <ligand>
        <name>dihydroxyacetone phosphate</name>
        <dbReference type="ChEBI" id="CHEBI:57642"/>
    </ligand>
</feature>
<keyword id="KW-0324">Glycolysis</keyword>
<keyword id="KW-0456">Lyase</keyword>
<keyword id="KW-0479">Metal-binding</keyword>
<keyword id="KW-0862">Zinc</keyword>
<name>ALF2_STAAC</name>